<evidence type="ECO:0000255" key="1"/>
<evidence type="ECO:0000256" key="2">
    <source>
        <dbReference type="SAM" id="MobiDB-lite"/>
    </source>
</evidence>
<evidence type="ECO:0000305" key="3"/>
<dbReference type="EMBL" id="CP001953">
    <property type="protein sequence ID" value="ADE01589.1"/>
    <property type="molecule type" value="Genomic_DNA"/>
</dbReference>
<dbReference type="RefSeq" id="WP_004041224.1">
    <property type="nucleotide sequence ID" value="NC_013964.1"/>
</dbReference>
<dbReference type="SMR" id="D4GPW5"/>
<dbReference type="PaxDb" id="309800-C498_02075"/>
<dbReference type="EnsemblBacteria" id="ADE01589">
    <property type="protein sequence ID" value="ADE01589"/>
    <property type="gene ID" value="HVO_B0318"/>
</dbReference>
<dbReference type="GeneID" id="8919116"/>
<dbReference type="KEGG" id="hvo:HVO_B0318"/>
<dbReference type="eggNOG" id="arCOG00257">
    <property type="taxonomic scope" value="Archaea"/>
</dbReference>
<dbReference type="HOGENOM" id="CLU_038813_2_0_2"/>
<dbReference type="OrthoDB" id="26049at2157"/>
<dbReference type="Proteomes" id="UP000008243">
    <property type="component" value="Plasmid pHV3"/>
</dbReference>
<dbReference type="GO" id="GO:0005886">
    <property type="term" value="C:plasma membrane"/>
    <property type="evidence" value="ECO:0007669"/>
    <property type="project" value="InterPro"/>
</dbReference>
<dbReference type="CDD" id="cd19963">
    <property type="entry name" value="PBP1_BMP-like"/>
    <property type="match status" value="1"/>
</dbReference>
<dbReference type="Gene3D" id="3.40.50.2300">
    <property type="match status" value="2"/>
</dbReference>
<dbReference type="InterPro" id="IPR052910">
    <property type="entry name" value="ABC-Purine-Binding"/>
</dbReference>
<dbReference type="InterPro" id="IPR003760">
    <property type="entry name" value="PnrA-like"/>
</dbReference>
<dbReference type="PANTHER" id="PTHR43208">
    <property type="entry name" value="ABC TRANSPORTER SUBSTRATE-BINDING PROTEIN"/>
    <property type="match status" value="1"/>
</dbReference>
<dbReference type="PANTHER" id="PTHR43208:SF1">
    <property type="entry name" value="ABC TRANSPORTER SUBSTRATE-BINDING PROTEIN"/>
    <property type="match status" value="1"/>
</dbReference>
<dbReference type="Pfam" id="PF02608">
    <property type="entry name" value="Bmp"/>
    <property type="match status" value="1"/>
</dbReference>
<comment type="function">
    <text evidence="3">Part of an ABC transporter complex involved in glucose import.</text>
</comment>
<comment type="subunit">
    <text evidence="3">The complex is composed of two ATP-binding proteins (TsgD13), two transmembrane proteins (TsgB13 and TsgC13) and a solute-binding protein (TsgA13).</text>
</comment>
<comment type="similarity">
    <text evidence="3">Belongs to the BMP lipoprotein family.</text>
</comment>
<sequence>MLDEESSIQRRDVLSALGAAGVTTLAGCTGGDTGDTDDTEASETTASEGTTSGTTTGDVETTDGGGPSEGETVNAAWVYISEIGDLGWSWAHDQARQAVDEQYDWLETEYTEAVAPSDSERVFEQYAQGDVDVIFGTTFGYQDPMYAVAEDYPDTVFEHATGYRTRENMGRYMGRIYEPRYLAGQATGMVTENNTIGYVAAFPIPEVVRSINAMALGARSVNPEATFKVRWVNAWFDPPTAREAANALIDEGCDVIAQEQDSPAAVRAASDAGVWTSGYNAPMGQFGGENYLISPIWDWTEFYGPTLESLHEGSWEADAFWGGMETGVPMLDEWGPNVSQEVKDQVAATEEQILNDELDVWAGSAFEGESDEFLFQEMSSFVEGVEGEVPS</sequence>
<proteinExistence type="inferred from homology"/>
<organism>
    <name type="scientific">Haloferax volcanii (strain ATCC 29605 / DSM 3757 / JCM 8879 / NBRC 14742 / NCIMB 2012 / VKM B-1768 / DS2)</name>
    <name type="common">Halobacterium volcanii</name>
    <dbReference type="NCBI Taxonomy" id="309800"/>
    <lineage>
        <taxon>Archaea</taxon>
        <taxon>Methanobacteriati</taxon>
        <taxon>Methanobacteriota</taxon>
        <taxon>Stenosarchaea group</taxon>
        <taxon>Halobacteria</taxon>
        <taxon>Halobacteriales</taxon>
        <taxon>Haloferacaceae</taxon>
        <taxon>Haloferax</taxon>
    </lineage>
</organism>
<protein>
    <recommendedName>
        <fullName>Putative ABC transporter glucose-binding protein TsgA13</fullName>
    </recommendedName>
</protein>
<gene>
    <name type="primary">tsgA13</name>
    <name type="ordered locus">HVO_B0318</name>
</gene>
<keyword id="KW-0614">Plasmid</keyword>
<keyword id="KW-1185">Reference proteome</keyword>
<keyword id="KW-0732">Signal</keyword>
<name>TSGAD_HALVD</name>
<geneLocation type="plasmid">
    <name>pHV3</name>
</geneLocation>
<feature type="signal peptide" evidence="1">
    <location>
        <begin position="1"/>
        <end position="28"/>
    </location>
</feature>
<feature type="chain" id="PRO_0000420947" description="Putative ABC transporter glucose-binding protein TsgA13">
    <location>
        <begin position="29"/>
        <end position="391"/>
    </location>
</feature>
<feature type="region of interest" description="Disordered" evidence="2">
    <location>
        <begin position="24"/>
        <end position="71"/>
    </location>
</feature>
<feature type="compositionally biased region" description="Low complexity" evidence="2">
    <location>
        <begin position="42"/>
        <end position="59"/>
    </location>
</feature>
<reference key="1">
    <citation type="journal article" date="2010" name="PLoS ONE">
        <title>The complete genome sequence of Haloferax volcanii DS2, a model archaeon.</title>
        <authorList>
            <person name="Hartman A.L."/>
            <person name="Norais C."/>
            <person name="Badger J.H."/>
            <person name="Delmas S."/>
            <person name="Haldenby S."/>
            <person name="Madupu R."/>
            <person name="Robinson J."/>
            <person name="Khouri H."/>
            <person name="Ren Q."/>
            <person name="Lowe T.M."/>
            <person name="Maupin-Furlow J."/>
            <person name="Pohlschroder M."/>
            <person name="Daniels C."/>
            <person name="Pfeiffer F."/>
            <person name="Allers T."/>
            <person name="Eisen J.A."/>
        </authorList>
    </citation>
    <scope>NUCLEOTIDE SEQUENCE [LARGE SCALE GENOMIC DNA]</scope>
    <source>
        <strain>ATCC 29605 / DSM 3757 / JCM 8879 / NBRC 14742 / NCIMB 2012 / VKM B-1768 / DS2</strain>
    </source>
</reference>
<accession>D4GPW5</accession>